<keyword id="KW-0997">Cell inner membrane</keyword>
<keyword id="KW-1003">Cell membrane</keyword>
<keyword id="KW-0350">Heme biosynthesis</keyword>
<keyword id="KW-0472">Membrane</keyword>
<keyword id="KW-0808">Transferase</keyword>
<keyword id="KW-0812">Transmembrane</keyword>
<keyword id="KW-1133">Transmembrane helix</keyword>
<organism>
    <name type="scientific">Paracoccus denitrificans</name>
    <dbReference type="NCBI Taxonomy" id="266"/>
    <lineage>
        <taxon>Bacteria</taxon>
        <taxon>Pseudomonadati</taxon>
        <taxon>Pseudomonadota</taxon>
        <taxon>Alphaproteobacteria</taxon>
        <taxon>Rhodobacterales</taxon>
        <taxon>Paracoccaceae</taxon>
        <taxon>Paracoccus</taxon>
    </lineage>
</organism>
<sequence>MGPAEAGFGDYVALLKPRVMSLVVFTAFVGLWIAPQPVNPFVAFCAVLFIALGGGASGALNMWYDADIDAVMRRTAGRPVPSGRVTSQEPLAVGIALSGLSVMMLGAGGNWFAAGFLAFTIFFYAVVYTIWLKRSTPQNIVIGGAAGAFPPMIGWALPTGGIGIESLLMFALIFFWTPPHFWALALFMKDDYSKAGVPMLTVTHGRKVTRCHIFAYTLVLAPFALWLGFTSVGGPLYLAVSVVLNALFIAGGWQILRRSEDQAQADGYRVEKRYFRLSLYYTFLHFLALLVQHWVGGW</sequence>
<gene>
    <name evidence="1" type="primary">ctaB</name>
</gene>
<protein>
    <recommendedName>
        <fullName evidence="1">Protoheme IX farnesyltransferase</fullName>
        <ecNumber evidence="1">2.5.1.141</ecNumber>
    </recommendedName>
    <alternativeName>
        <fullName evidence="1">Heme B farnesyltransferase</fullName>
    </alternativeName>
    <alternativeName>
        <fullName evidence="1">Heme O synthase</fullName>
    </alternativeName>
</protein>
<proteinExistence type="inferred from homology"/>
<reference key="1">
    <citation type="journal article" date="1987" name="EMBO J.">
        <title>Isolation and analysis of the genes for cytochrome c oxidase in Paracoccus denitrificans.</title>
        <authorList>
            <person name="Raitio M."/>
            <person name="Jalli T."/>
            <person name="Saraste M."/>
        </authorList>
    </citation>
    <scope>NUCLEOTIDE SEQUENCE [GENOMIC DNA]</scope>
</reference>
<comment type="function">
    <text evidence="1">Converts heme B (protoheme IX) to heme O by substitution of the vinyl group on carbon 2 of heme B porphyrin ring with a hydroxyethyl farnesyl side group.</text>
</comment>
<comment type="catalytic activity">
    <reaction evidence="1">
        <text>heme b + (2E,6E)-farnesyl diphosphate + H2O = Fe(II)-heme o + diphosphate</text>
        <dbReference type="Rhea" id="RHEA:28070"/>
        <dbReference type="ChEBI" id="CHEBI:15377"/>
        <dbReference type="ChEBI" id="CHEBI:33019"/>
        <dbReference type="ChEBI" id="CHEBI:60344"/>
        <dbReference type="ChEBI" id="CHEBI:60530"/>
        <dbReference type="ChEBI" id="CHEBI:175763"/>
        <dbReference type="EC" id="2.5.1.141"/>
    </reaction>
</comment>
<comment type="pathway">
    <text evidence="1">Porphyrin-containing compound metabolism; heme O biosynthesis; heme O from protoheme: step 1/1.</text>
</comment>
<comment type="subunit">
    <text evidence="1">Interacts with CtaA.</text>
</comment>
<comment type="subcellular location">
    <subcellularLocation>
        <location evidence="1">Cell inner membrane</location>
        <topology evidence="1">Multi-pass membrane protein</topology>
    </subcellularLocation>
</comment>
<comment type="miscellaneous">
    <text evidence="1">Carbon 2 of the heme B porphyrin ring is defined according to the Fischer nomenclature.</text>
</comment>
<comment type="similarity">
    <text evidence="1">Belongs to the UbiA prenyltransferase family. Protoheme IX farnesyltransferase subfamily.</text>
</comment>
<comment type="sequence caution" evidence="2">
    <conflict type="erroneous initiation">
        <sequence resource="EMBL-CDS" id="CAA29269"/>
    </conflict>
</comment>
<name>COXX_PARDE</name>
<evidence type="ECO:0000255" key="1">
    <source>
        <dbReference type="HAMAP-Rule" id="MF_00154"/>
    </source>
</evidence>
<evidence type="ECO:0000305" key="2"/>
<feature type="chain" id="PRO_0000162908" description="Protoheme IX farnesyltransferase">
    <location>
        <begin position="1"/>
        <end position="298"/>
    </location>
</feature>
<feature type="transmembrane region" description="Helical" evidence="1">
    <location>
        <begin position="19"/>
        <end position="39"/>
    </location>
</feature>
<feature type="transmembrane region" description="Helical" evidence="1">
    <location>
        <begin position="40"/>
        <end position="60"/>
    </location>
</feature>
<feature type="transmembrane region" description="Helical" evidence="1">
    <location>
        <begin position="91"/>
        <end position="111"/>
    </location>
</feature>
<feature type="transmembrane region" description="Helical" evidence="1">
    <location>
        <begin position="112"/>
        <end position="132"/>
    </location>
</feature>
<feature type="transmembrane region" description="Helical" evidence="1">
    <location>
        <begin position="140"/>
        <end position="160"/>
    </location>
</feature>
<feature type="transmembrane region" description="Helical" evidence="1">
    <location>
        <begin position="167"/>
        <end position="187"/>
    </location>
</feature>
<feature type="transmembrane region" description="Helical" evidence="1">
    <location>
        <begin position="213"/>
        <end position="233"/>
    </location>
</feature>
<feature type="transmembrane region" description="Helical" evidence="1">
    <location>
        <begin position="236"/>
        <end position="256"/>
    </location>
</feature>
<feature type="transmembrane region" description="Helical" evidence="1">
    <location>
        <begin position="277"/>
        <end position="297"/>
    </location>
</feature>
<dbReference type="EC" id="2.5.1.141" evidence="1"/>
<dbReference type="EMBL" id="X05828">
    <property type="protein sequence ID" value="CAA29269.1"/>
    <property type="status" value="ALT_INIT"/>
    <property type="molecule type" value="Genomic_DNA"/>
</dbReference>
<dbReference type="PIR" id="S03804">
    <property type="entry name" value="S03804"/>
</dbReference>
<dbReference type="SMR" id="P08301"/>
<dbReference type="UniPathway" id="UPA00834">
    <property type="reaction ID" value="UER00712"/>
</dbReference>
<dbReference type="GO" id="GO:0005886">
    <property type="term" value="C:plasma membrane"/>
    <property type="evidence" value="ECO:0007669"/>
    <property type="project" value="UniProtKB-SubCell"/>
</dbReference>
<dbReference type="GO" id="GO:0008495">
    <property type="term" value="F:protoheme IX farnesyltransferase activity"/>
    <property type="evidence" value="ECO:0007669"/>
    <property type="project" value="UniProtKB-UniRule"/>
</dbReference>
<dbReference type="GO" id="GO:0048034">
    <property type="term" value="P:heme O biosynthetic process"/>
    <property type="evidence" value="ECO:0007669"/>
    <property type="project" value="UniProtKB-UniRule"/>
</dbReference>
<dbReference type="CDD" id="cd13957">
    <property type="entry name" value="PT_UbiA_Cox10"/>
    <property type="match status" value="1"/>
</dbReference>
<dbReference type="Gene3D" id="1.10.357.140">
    <property type="entry name" value="UbiA prenyltransferase"/>
    <property type="match status" value="1"/>
</dbReference>
<dbReference type="HAMAP" id="MF_00154">
    <property type="entry name" value="CyoE_CtaB"/>
    <property type="match status" value="1"/>
</dbReference>
<dbReference type="InterPro" id="IPR006369">
    <property type="entry name" value="Protohaem_IX_farnesylTrfase"/>
</dbReference>
<dbReference type="InterPro" id="IPR000537">
    <property type="entry name" value="UbiA_prenyltransferase"/>
</dbReference>
<dbReference type="InterPro" id="IPR030470">
    <property type="entry name" value="UbiA_prenylTrfase_CS"/>
</dbReference>
<dbReference type="InterPro" id="IPR044878">
    <property type="entry name" value="UbiA_sf"/>
</dbReference>
<dbReference type="NCBIfam" id="TIGR01473">
    <property type="entry name" value="cyoE_ctaB"/>
    <property type="match status" value="1"/>
</dbReference>
<dbReference type="NCBIfam" id="NF003349">
    <property type="entry name" value="PRK04375.1-2"/>
    <property type="match status" value="1"/>
</dbReference>
<dbReference type="PANTHER" id="PTHR43448:SF7">
    <property type="entry name" value="4-HYDROXYBENZOATE SOLANESYLTRANSFERASE"/>
    <property type="match status" value="1"/>
</dbReference>
<dbReference type="PANTHER" id="PTHR43448">
    <property type="entry name" value="PROTOHEME IX FARNESYLTRANSFERASE, MITOCHONDRIAL"/>
    <property type="match status" value="1"/>
</dbReference>
<dbReference type="Pfam" id="PF01040">
    <property type="entry name" value="UbiA"/>
    <property type="match status" value="1"/>
</dbReference>
<dbReference type="PROSITE" id="PS00943">
    <property type="entry name" value="UBIA"/>
    <property type="match status" value="1"/>
</dbReference>
<accession>P08301</accession>